<protein>
    <recommendedName>
        <fullName evidence="1">Glutamate--tRNA ligase</fullName>
        <ecNumber evidence="1">6.1.1.17</ecNumber>
    </recommendedName>
    <alternativeName>
        <fullName evidence="1">Glutamyl-tRNA synthetase</fullName>
        <shortName evidence="1">GluRS</shortName>
    </alternativeName>
</protein>
<reference key="1">
    <citation type="journal article" date="2002" name="DNA Res.">
        <title>Complete genomic sequence of nitrogen-fixing symbiotic bacterium Bradyrhizobium japonicum USDA110.</title>
        <authorList>
            <person name="Kaneko T."/>
            <person name="Nakamura Y."/>
            <person name="Sato S."/>
            <person name="Minamisawa K."/>
            <person name="Uchiumi T."/>
            <person name="Sasamoto S."/>
            <person name="Watanabe A."/>
            <person name="Idesawa K."/>
            <person name="Iriguchi M."/>
            <person name="Kawashima K."/>
            <person name="Kohara M."/>
            <person name="Matsumoto M."/>
            <person name="Shimpo S."/>
            <person name="Tsuruoka H."/>
            <person name="Wada T."/>
            <person name="Yamada M."/>
            <person name="Tabata S."/>
        </authorList>
    </citation>
    <scope>NUCLEOTIDE SEQUENCE [LARGE SCALE GENOMIC DNA]</scope>
    <source>
        <strain>JCM 10833 / BCRC 13528 / IAM 13628 / NBRC 14792 / USDA 110</strain>
    </source>
</reference>
<accession>Q89KR5</accession>
<dbReference type="EC" id="6.1.1.17" evidence="1"/>
<dbReference type="EMBL" id="BA000040">
    <property type="protein sequence ID" value="BAC50103.1"/>
    <property type="molecule type" value="Genomic_DNA"/>
</dbReference>
<dbReference type="RefSeq" id="NP_771478.1">
    <property type="nucleotide sequence ID" value="NC_004463.1"/>
</dbReference>
<dbReference type="RefSeq" id="WP_011087606.1">
    <property type="nucleotide sequence ID" value="NC_004463.1"/>
</dbReference>
<dbReference type="SMR" id="Q89KR5"/>
<dbReference type="FunCoup" id="Q89KR5">
    <property type="interactions" value="747"/>
</dbReference>
<dbReference type="STRING" id="224911.AAV28_21500"/>
<dbReference type="EnsemblBacteria" id="BAC50103">
    <property type="protein sequence ID" value="BAC50103"/>
    <property type="gene ID" value="BAC50103"/>
</dbReference>
<dbReference type="GeneID" id="46491841"/>
<dbReference type="KEGG" id="bja:blr4838"/>
<dbReference type="PATRIC" id="fig|224911.44.peg.4683"/>
<dbReference type="eggNOG" id="COG0008">
    <property type="taxonomic scope" value="Bacteria"/>
</dbReference>
<dbReference type="HOGENOM" id="CLU_015768_6_3_5"/>
<dbReference type="InParanoid" id="Q89KR5"/>
<dbReference type="OrthoDB" id="9807503at2"/>
<dbReference type="PhylomeDB" id="Q89KR5"/>
<dbReference type="Proteomes" id="UP000002526">
    <property type="component" value="Chromosome"/>
</dbReference>
<dbReference type="GO" id="GO:0005829">
    <property type="term" value="C:cytosol"/>
    <property type="evidence" value="ECO:0000318"/>
    <property type="project" value="GO_Central"/>
</dbReference>
<dbReference type="GO" id="GO:0005524">
    <property type="term" value="F:ATP binding"/>
    <property type="evidence" value="ECO:0007669"/>
    <property type="project" value="UniProtKB-UniRule"/>
</dbReference>
<dbReference type="GO" id="GO:0004818">
    <property type="term" value="F:glutamate-tRNA ligase activity"/>
    <property type="evidence" value="ECO:0000318"/>
    <property type="project" value="GO_Central"/>
</dbReference>
<dbReference type="GO" id="GO:0000049">
    <property type="term" value="F:tRNA binding"/>
    <property type="evidence" value="ECO:0007669"/>
    <property type="project" value="InterPro"/>
</dbReference>
<dbReference type="GO" id="GO:0008270">
    <property type="term" value="F:zinc ion binding"/>
    <property type="evidence" value="ECO:0007669"/>
    <property type="project" value="InterPro"/>
</dbReference>
<dbReference type="GO" id="GO:0006424">
    <property type="term" value="P:glutamyl-tRNA aminoacylation"/>
    <property type="evidence" value="ECO:0000318"/>
    <property type="project" value="GO_Central"/>
</dbReference>
<dbReference type="CDD" id="cd00808">
    <property type="entry name" value="GluRS_core"/>
    <property type="match status" value="1"/>
</dbReference>
<dbReference type="FunFam" id="3.40.50.620:FF:000007">
    <property type="entry name" value="Glutamate--tRNA ligase"/>
    <property type="match status" value="1"/>
</dbReference>
<dbReference type="Gene3D" id="1.10.10.350">
    <property type="match status" value="1"/>
</dbReference>
<dbReference type="Gene3D" id="3.40.50.620">
    <property type="entry name" value="HUPs"/>
    <property type="match status" value="1"/>
</dbReference>
<dbReference type="HAMAP" id="MF_00022">
    <property type="entry name" value="Glu_tRNA_synth_type1"/>
    <property type="match status" value="1"/>
</dbReference>
<dbReference type="InterPro" id="IPR045462">
    <property type="entry name" value="aa-tRNA-synth_I_cd-bd"/>
</dbReference>
<dbReference type="InterPro" id="IPR020751">
    <property type="entry name" value="aa-tRNA-synth_I_codon-bd_sub2"/>
</dbReference>
<dbReference type="InterPro" id="IPR001412">
    <property type="entry name" value="aa-tRNA-synth_I_CS"/>
</dbReference>
<dbReference type="InterPro" id="IPR008925">
    <property type="entry name" value="aa_tRNA-synth_I_cd-bd_sf"/>
</dbReference>
<dbReference type="InterPro" id="IPR004527">
    <property type="entry name" value="Glu-tRNA-ligase_bac/mito"/>
</dbReference>
<dbReference type="InterPro" id="IPR000924">
    <property type="entry name" value="Glu/Gln-tRNA-synth"/>
</dbReference>
<dbReference type="InterPro" id="IPR020058">
    <property type="entry name" value="Glu/Gln-tRNA-synth_Ib_cat-dom"/>
</dbReference>
<dbReference type="InterPro" id="IPR049940">
    <property type="entry name" value="GluQ/Sye"/>
</dbReference>
<dbReference type="InterPro" id="IPR033910">
    <property type="entry name" value="GluRS_core"/>
</dbReference>
<dbReference type="InterPro" id="IPR014729">
    <property type="entry name" value="Rossmann-like_a/b/a_fold"/>
</dbReference>
<dbReference type="NCBIfam" id="TIGR00464">
    <property type="entry name" value="gltX_bact"/>
    <property type="match status" value="1"/>
</dbReference>
<dbReference type="PANTHER" id="PTHR43311">
    <property type="entry name" value="GLUTAMATE--TRNA LIGASE"/>
    <property type="match status" value="1"/>
</dbReference>
<dbReference type="PANTHER" id="PTHR43311:SF2">
    <property type="entry name" value="GLUTAMATE--TRNA LIGASE, MITOCHONDRIAL-RELATED"/>
    <property type="match status" value="1"/>
</dbReference>
<dbReference type="Pfam" id="PF19269">
    <property type="entry name" value="Anticodon_2"/>
    <property type="match status" value="1"/>
</dbReference>
<dbReference type="Pfam" id="PF00749">
    <property type="entry name" value="tRNA-synt_1c"/>
    <property type="match status" value="1"/>
</dbReference>
<dbReference type="PRINTS" id="PR00987">
    <property type="entry name" value="TRNASYNTHGLU"/>
</dbReference>
<dbReference type="SUPFAM" id="SSF48163">
    <property type="entry name" value="An anticodon-binding domain of class I aminoacyl-tRNA synthetases"/>
    <property type="match status" value="1"/>
</dbReference>
<dbReference type="SUPFAM" id="SSF52374">
    <property type="entry name" value="Nucleotidylyl transferase"/>
    <property type="match status" value="1"/>
</dbReference>
<dbReference type="PROSITE" id="PS00178">
    <property type="entry name" value="AA_TRNA_LIGASE_I"/>
    <property type="match status" value="1"/>
</dbReference>
<comment type="function">
    <text evidence="1">Catalyzes the attachment of glutamate to tRNA(Glu) in a two-step reaction: glutamate is first activated by ATP to form Glu-AMP and then transferred to the acceptor end of tRNA(Glu).</text>
</comment>
<comment type="catalytic activity">
    <reaction evidence="1">
        <text>tRNA(Glu) + L-glutamate + ATP = L-glutamyl-tRNA(Glu) + AMP + diphosphate</text>
        <dbReference type="Rhea" id="RHEA:23540"/>
        <dbReference type="Rhea" id="RHEA-COMP:9663"/>
        <dbReference type="Rhea" id="RHEA-COMP:9680"/>
        <dbReference type="ChEBI" id="CHEBI:29985"/>
        <dbReference type="ChEBI" id="CHEBI:30616"/>
        <dbReference type="ChEBI" id="CHEBI:33019"/>
        <dbReference type="ChEBI" id="CHEBI:78442"/>
        <dbReference type="ChEBI" id="CHEBI:78520"/>
        <dbReference type="ChEBI" id="CHEBI:456215"/>
        <dbReference type="EC" id="6.1.1.17"/>
    </reaction>
</comment>
<comment type="subunit">
    <text evidence="1">Monomer.</text>
</comment>
<comment type="subcellular location">
    <subcellularLocation>
        <location evidence="1">Cytoplasm</location>
    </subcellularLocation>
</comment>
<comment type="similarity">
    <text evidence="1">Belongs to the class-I aminoacyl-tRNA synthetase family. Glutamate--tRNA ligase type 1 subfamily.</text>
</comment>
<gene>
    <name evidence="1" type="primary">gltX</name>
    <name type="ordered locus">blr4838</name>
</gene>
<keyword id="KW-0030">Aminoacyl-tRNA synthetase</keyword>
<keyword id="KW-0067">ATP-binding</keyword>
<keyword id="KW-0963">Cytoplasm</keyword>
<keyword id="KW-0436">Ligase</keyword>
<keyword id="KW-0547">Nucleotide-binding</keyword>
<keyword id="KW-0648">Protein biosynthesis</keyword>
<keyword id="KW-1185">Reference proteome</keyword>
<feature type="chain" id="PRO_0000119521" description="Glutamate--tRNA ligase">
    <location>
        <begin position="1"/>
        <end position="475"/>
    </location>
</feature>
<feature type="short sequence motif" description="'HIGH' region" evidence="1">
    <location>
        <begin position="11"/>
        <end position="21"/>
    </location>
</feature>
<feature type="short sequence motif" description="'KMSKS' region" evidence="1">
    <location>
        <begin position="240"/>
        <end position="244"/>
    </location>
</feature>
<feature type="binding site" evidence="1">
    <location>
        <position position="243"/>
    </location>
    <ligand>
        <name>ATP</name>
        <dbReference type="ChEBI" id="CHEBI:30616"/>
    </ligand>
</feature>
<name>SYE_BRADU</name>
<proteinExistence type="inferred from homology"/>
<organism>
    <name type="scientific">Bradyrhizobium diazoefficiens (strain JCM 10833 / BCRC 13528 / IAM 13628 / NBRC 14792 / USDA 110)</name>
    <dbReference type="NCBI Taxonomy" id="224911"/>
    <lineage>
        <taxon>Bacteria</taxon>
        <taxon>Pseudomonadati</taxon>
        <taxon>Pseudomonadota</taxon>
        <taxon>Alphaproteobacteria</taxon>
        <taxon>Hyphomicrobiales</taxon>
        <taxon>Nitrobacteraceae</taxon>
        <taxon>Bradyrhizobium</taxon>
    </lineage>
</organism>
<sequence length="475" mass="52789">MTDSVVTRFAPSPTGFLHIGGARTALFNWLYAKKHGGKMLLRIEDTDRERSTEAAIGAILDGLKWLELGWDGDVIYQFSRAARHREVAEQLLADGKAYRCYATAEELTAMREKARAEGRTRLYDGMWRDRDPATAPSDVKPTIRLRAPQTGETVIEDQVQGRVVWQNENLDDLVLLRGDGNPTYMLAVVVDDHDMGVTHVIRGDDHLINAARQKQIHDAMGWALPSMSHIPLIHGPDGSKLSKRHGALGVDAYRAMGYLPAALRNYLVRLGWSHGDQEIFSTEEMIAAFDLSSVGRAAARFDFAKLENLNGHYIRHADDQSLVKMFEDVLDHVVPSRDELKAKLNDTTRAQLLKAMPALKERAKTLIELIDSAYFIFADRPLELDPKAQALLTPDNRKLIGQLHSALENVETWSGATTEAALRAFAEENSLKLGAVAQPLRAALTGRTTSPGIFEVLDVLGRQESLGRLKDQAKD</sequence>
<evidence type="ECO:0000255" key="1">
    <source>
        <dbReference type="HAMAP-Rule" id="MF_00022"/>
    </source>
</evidence>